<sequence length="2856" mass="317064">MASEDNRAPSRPPTGDDGGGGGKEETPTEGGALSLKPGLPIRGIRMKFAVLTGLVEVGEVSNRDIVETVFNLLVGGQFDLEMNFIIQEGESIMCMVELLEKCDVTCQAEVWSMFTAILKKSIRNLQVCTEVGLVEKVLGKIEKVDSMIADLLVDMLGVLASYNLTVRELKLFFSKLQGDKGQWPPHAGKLLSVLKHMPQKYGPDAFFNFPGKSAAAIALPPIARWPYQNGFTFHTWLRMDPVNNINVDKDKPYLYCFRTSKGLGYSAHFVGGCLIITSIKSKGKGFQHCVKFDFKPQKWYMVTIVHIYNRWKNSELRCYVNGELASYGEITWFVNTSDTFDKCFLGSSETADANRVFCGQMTAVYLFSDALNAAQIFAIYQLGLGYKGTFKFKAESDLFLAEHHKLLLYDGKLSSAIAFMYNPRATDAQLCLESSPKDNPSIFVHSPHALMLQDVKAVLTHSIQSAMHSIGGVQVLFPLFAQLDYKQYLSDEVDLTICTTLLAFIMELLKNSIAMQEQMLACKGFLVIGYSLEKSSKSHVSRAVLELCLAFSKYLSNLQNGMPLLKQLCDHILLNPAVWIHTPAKVQLMLYTYLSTEFIGTVNIYNTIRRVGTVLLIMHTLKYYYWAVNPQDRSGITPKGLDGPRPNQKEILSLRAFLLMFIKQLVMKDSGVKEDELQAILNYLLTMHEDDNLMDVLQLLVALMAEHPNSMIPAFDQRNGLRVIYKLLASKSEGIRVQALKALGYFLKHLAPKRKAEVMLGHGLFSLLAERLMLQTNLITMTMYNVLFEILIEQICTQVIHKQHPDPDSTVKIQNPQILKVIATLLRNSPQCPESMEVRRAFLSDMIKLFNNSRENRRSLLQCSVWQEWMLSLCYFNPKNSDEQKITEMVYAIFRILLYHAVKYEWGGWRVWVDTLSITHSKVTFEIHKENLANIFREEQRKGDEETGPCSSSLVPEGTGATRGVDVSVGSQHEDRKDSPISPHFTRNSDENSSIGRASSIDSASNTELQTHDMSSDEKKVERENQELLDQATVEETATNGAKDDLETSSDAAEPVTINSNSLEPGKDTVTISEVSASISSPSEEDAAEMPELLEKSGVEEKEDDDYVELKVEGSPTEEAGLPTELQGEGLSVAASGGREEPDMCGHGCEVQVEAPITKIHNDPETTDSEDSRFPTVATAGSLATSSEVPVPQATVQSDSHEMLDGGMKATNLAGETESVSDCADNVSEAPATSEQKITKLDVSSVASDTERFELKASTSTEAPQPQRHGLEISRQQEQTAQGTAPDAVDQQRRDSRSTMFRIPEFKWSQMHQRLLTDLLFSIETDIQMWRSHSTKTVMDFVNSSDNVIFVHNTIHLISQVMDNMVMACGGILPLLSAATSATHELENIEPTQGLSIEASVTFLQRLISLVDVLIFASSLGFTEIEAEKNMSSGGILRQCLRLVCAVAVRNCLECQQHSQLKARGDTAKSSKTIHSLIPMGKSAAKSPVDIVTGGISSVRDLDRLPARTWTLIGLRAVVFRDIEDSKQAQFLALAVVYFISVLMVSKYRDILEPQDERHSQSLKETSSDNGNASLPDAENTPAEFSSLTLSSVEESLEGTSCTRRRDSGLGEETASGLGSGLSVASPAAPLGVSAGPDAISEVLCTLSLEVNKSQETRIDGGNELDRKVTPSVPVSKNVNVKDILRSLVNMPADGVTVDPALLPPACLGALGDLSVDPPMQFRSFDRSVIIATKKSSVLPSALTTSAPSSAVSVVSSVDPTHASDTGGESPGSRSPKCKTALSCKQLAPSHKTPAAHMSITERLEHALEKAAPLLREIFVDFAPFLSRTLLGSHGQELLIEGTSLVCMKSSSSVVELVMLLCSQEWQNSIQKNAGLAFIELVNEGRLLSQTMKDHLVRVANEAEFILSRQRAEDIHRHAEFESLCAQYSADKREEEKMCDHLIRAAKYRDHVTATQLIQKIINLLTDKHGAWGSSAVSRPREFWRLDYWEDDLRRRRRFVRNPLGSTHPEATLKTAVEHAADEDILAKGKQSIKSQALGNQNSENEALLEGDDDTLSSVDEKDLENLAGPVSLSTPAQLVAPSVVVKGTLSVTSSELYFEVDEEDPNFKKIDPKILAYTEGLHGKWLFTEIRSIFSRRYLLQNTALEIFMANRVAVMFNFPDPATVKKVVNYLPRVGVGTSFGLPQTRRISLATPRQLFKASNMTQRWQHREISNFEYLMFLNTIAGRSYNDLNQYPVFPWVITNYESEELDLTLPSNFRDLSKPIGALNPKRAAFFAERFESWEDDQVPKFHYGTHYSTASFVLAWLLRIEPFTTYFLNLQGGKFDHADRTFSSVSRAWRNSQRDTSDIKELIPEFYYLPEMFVNFNNYNLGVMDDGTVVSDVELPPWAKTSEEFVRINRLALESEFVSCQLHQWIDLIFGYKQQGPEAVRALNVFYYLTYEGAVNLNSITDPVLREAVEAQIRSFGQTPSQLLIEPHPPRGSAMQASPLMFTDQAQQDVIMVLKFPSNSPVTHVAANTQPGLAMPAVITVTANRLFAVNKWHNLPAHQGAVQDQPYQLPVEIDPLIACGTGTHRRQVTDLLDQSIQVHSQCFVITSDNRYILVCGFWDKSFRVYSTDTGKLIQVVFGHWDVVTCLARSESYIGGNCYILSGSRDATLLLWYWNGKSSGIGDNPGGETATPRAILTGHDYEITCAAVCAELGLVLSGSQEGPCLIHSMNGDLLRTLEGPENCLKPKLIQASREGHCVIFYENGCFCTFSVNGKLQATVETDDHIRAIQLSRDGQYLLTGGDNGVVIVRQVSDLKQLFAYPGCDAGIRAMALSFDQRCIISGMASGSIVLFYNDFNRWHHEYQTRY</sequence>
<comment type="function">
    <text evidence="1 6">Involved in coupling signal transduction and vesicle trafficking to enable polarized secretion and/or membrane deposition of immune effector molecules (PubMed:11254716). Involved in phagophore growth during mitophagy by regulating ATG9A trafficking to mitochondria (By similarity).</text>
</comment>
<comment type="subunit">
    <text evidence="1">Interacts with TOM1 and TOLLIP.</text>
</comment>
<comment type="subcellular location">
    <subcellularLocation>
        <location evidence="6">Cell membrane</location>
        <topology evidence="2">Single-pass membrane protein</topology>
    </subcellularLocation>
    <subcellularLocation>
        <location evidence="6">Endoplasmic reticulum membrane</location>
        <topology evidence="2">Single-pass membrane protein</topology>
    </subcellularLocation>
    <subcellularLocation>
        <location evidence="6">Golgi apparatus</location>
        <location evidence="6">trans-Golgi network membrane</location>
        <topology evidence="2">Single-pass membrane protein</topology>
    </subcellularLocation>
    <subcellularLocation>
        <location evidence="6">Lysosome membrane</location>
        <topology evidence="2">Single-pass membrane protein</topology>
    </subcellularLocation>
</comment>
<comment type="alternative products">
    <event type="alternative splicing"/>
    <isoform>
        <id>Q9ESE1-1</id>
        <name>1</name>
        <name evidence="7">lba-alpha</name>
        <sequence type="displayed"/>
    </isoform>
    <isoform>
        <id>Q9ESE1-2</id>
        <name>2</name>
        <name evidence="7">lba-beta</name>
        <sequence type="described" ref="VSP_038229 VSP_038230"/>
    </isoform>
    <isoform>
        <id>Q9ESE1-3</id>
        <name>3</name>
        <name evidence="7">lba-gamma</name>
        <sequence type="described" ref="VSP_038227 VSP_038228"/>
    </isoform>
</comment>
<comment type="tissue specificity">
    <text evidence="6">Isoform 1 is expressed in the brain, is absent from the lung and the bone marrow and is less abundant in the spleen. Isoform 2 is expressed in the spleen, lung, brain and bone marrow. Isoform 3 is expressed in the brain, is absent from the bone marrow and is less abundant in the spleen and lung.</text>
</comment>
<comment type="induction">
    <text evidence="6">By lipopolysaccharide (LPS).</text>
</comment>
<gene>
    <name type="primary">Lrba</name>
    <name evidence="7" type="synonym">Bgl</name>
    <name evidence="7" type="synonym">Lba</name>
</gene>
<name>LRBA_MOUSE</name>
<proteinExistence type="evidence at protein level"/>
<organism>
    <name type="scientific">Mus musculus</name>
    <name type="common">Mouse</name>
    <dbReference type="NCBI Taxonomy" id="10090"/>
    <lineage>
        <taxon>Eukaryota</taxon>
        <taxon>Metazoa</taxon>
        <taxon>Chordata</taxon>
        <taxon>Craniata</taxon>
        <taxon>Vertebrata</taxon>
        <taxon>Euteleostomi</taxon>
        <taxon>Mammalia</taxon>
        <taxon>Eutheria</taxon>
        <taxon>Euarchontoglires</taxon>
        <taxon>Glires</taxon>
        <taxon>Rodentia</taxon>
        <taxon>Myomorpha</taxon>
        <taxon>Muroidea</taxon>
        <taxon>Muridae</taxon>
        <taxon>Murinae</taxon>
        <taxon>Mus</taxon>
        <taxon>Mus</taxon>
    </lineage>
</organism>
<evidence type="ECO:0000250" key="1">
    <source>
        <dbReference type="UniProtKB" id="P50851"/>
    </source>
</evidence>
<evidence type="ECO:0000255" key="2"/>
<evidence type="ECO:0000255" key="3">
    <source>
        <dbReference type="PROSITE-ProRule" id="PRU00026"/>
    </source>
</evidence>
<evidence type="ECO:0000255" key="4">
    <source>
        <dbReference type="PROSITE-ProRule" id="PRU01119"/>
    </source>
</evidence>
<evidence type="ECO:0000256" key="5">
    <source>
        <dbReference type="SAM" id="MobiDB-lite"/>
    </source>
</evidence>
<evidence type="ECO:0000269" key="6">
    <source>
    </source>
</evidence>
<evidence type="ECO:0000303" key="7">
    <source>
    </source>
</evidence>
<evidence type="ECO:0007744" key="8">
    <source>
    </source>
</evidence>
<protein>
    <recommendedName>
        <fullName>Lipopolysaccharide-responsive and beige-like anchor protein</fullName>
    </recommendedName>
    <alternativeName>
        <fullName evidence="7">Beige-like protein</fullName>
    </alternativeName>
</protein>
<keyword id="KW-0007">Acetylation</keyword>
<keyword id="KW-0025">Alternative splicing</keyword>
<keyword id="KW-1003">Cell membrane</keyword>
<keyword id="KW-0256">Endoplasmic reticulum</keyword>
<keyword id="KW-0333">Golgi apparatus</keyword>
<keyword id="KW-0458">Lysosome</keyword>
<keyword id="KW-0472">Membrane</keyword>
<keyword id="KW-0597">Phosphoprotein</keyword>
<keyword id="KW-1185">Reference proteome</keyword>
<keyword id="KW-0677">Repeat</keyword>
<keyword id="KW-0812">Transmembrane</keyword>
<keyword id="KW-1133">Transmembrane helix</keyword>
<keyword id="KW-0853">WD repeat</keyword>
<dbReference type="EMBL" id="AF187731">
    <property type="protein sequence ID" value="AAG14003.1"/>
    <property type="molecule type" value="mRNA"/>
</dbReference>
<dbReference type="EMBL" id="AF188506">
    <property type="protein sequence ID" value="AAG15400.1"/>
    <property type="molecule type" value="mRNA"/>
</dbReference>
<dbReference type="EMBL" id="AF188507">
    <property type="protein sequence ID" value="AAG15401.1"/>
    <property type="molecule type" value="mRNA"/>
</dbReference>
<dbReference type="RefSeq" id="NP_001071155.1">
    <property type="nucleotide sequence ID" value="NM_001077687.1"/>
</dbReference>
<dbReference type="RefSeq" id="NP_001071156.1">
    <property type="nucleotide sequence ID" value="NM_001077688.1"/>
</dbReference>
<dbReference type="RefSeq" id="NP_109620.2">
    <property type="nucleotide sequence ID" value="NM_030695.2"/>
</dbReference>
<dbReference type="SMR" id="Q9ESE1"/>
<dbReference type="BioGRID" id="219824">
    <property type="interactions" value="2"/>
</dbReference>
<dbReference type="FunCoup" id="Q9ESE1">
    <property type="interactions" value="3065"/>
</dbReference>
<dbReference type="IntAct" id="Q9ESE1">
    <property type="interactions" value="2"/>
</dbReference>
<dbReference type="STRING" id="10090.ENSMUSP00000103261"/>
<dbReference type="GlyGen" id="Q9ESE1">
    <property type="glycosylation" value="6 sites, 4 N-linked glycans (4 sites), 1 O-linked glycan (1 site)"/>
</dbReference>
<dbReference type="iPTMnet" id="Q9ESE1"/>
<dbReference type="PhosphoSitePlus" id="Q9ESE1"/>
<dbReference type="SwissPalm" id="Q9ESE1"/>
<dbReference type="jPOST" id="Q9ESE1"/>
<dbReference type="PaxDb" id="10090-ENSMUSP00000103261"/>
<dbReference type="PeptideAtlas" id="Q9ESE1"/>
<dbReference type="ProteomicsDB" id="290145">
    <molecule id="Q9ESE1-1"/>
</dbReference>
<dbReference type="ProteomicsDB" id="290146">
    <molecule id="Q9ESE1-2"/>
</dbReference>
<dbReference type="ProteomicsDB" id="290147">
    <molecule id="Q9ESE1-3"/>
</dbReference>
<dbReference type="Pumba" id="Q9ESE1"/>
<dbReference type="DNASU" id="80877"/>
<dbReference type="GeneID" id="80877"/>
<dbReference type="KEGG" id="mmu:80877"/>
<dbReference type="AGR" id="MGI:1933162"/>
<dbReference type="CTD" id="987"/>
<dbReference type="MGI" id="MGI:1933162">
    <property type="gene designation" value="Lrba"/>
</dbReference>
<dbReference type="eggNOG" id="KOG1787">
    <property type="taxonomic scope" value="Eukaryota"/>
</dbReference>
<dbReference type="InParanoid" id="Q9ESE1"/>
<dbReference type="OrthoDB" id="26681at2759"/>
<dbReference type="PhylomeDB" id="Q9ESE1"/>
<dbReference type="BioGRID-ORCS" id="80877">
    <property type="hits" value="4 hits in 77 CRISPR screens"/>
</dbReference>
<dbReference type="ChiTaRS" id="Lrba">
    <property type="organism name" value="mouse"/>
</dbReference>
<dbReference type="PRO" id="PR:Q9ESE1"/>
<dbReference type="Proteomes" id="UP000000589">
    <property type="component" value="Unplaced"/>
</dbReference>
<dbReference type="RNAct" id="Q9ESE1">
    <property type="molecule type" value="protein"/>
</dbReference>
<dbReference type="GO" id="GO:0031410">
    <property type="term" value="C:cytoplasmic vesicle"/>
    <property type="evidence" value="ECO:0000314"/>
    <property type="project" value="MGI"/>
</dbReference>
<dbReference type="GO" id="GO:0005783">
    <property type="term" value="C:endoplasmic reticulum"/>
    <property type="evidence" value="ECO:0000314"/>
    <property type="project" value="UniProtKB"/>
</dbReference>
<dbReference type="GO" id="GO:0005789">
    <property type="term" value="C:endoplasmic reticulum membrane"/>
    <property type="evidence" value="ECO:0007669"/>
    <property type="project" value="UniProtKB-SubCell"/>
</dbReference>
<dbReference type="GO" id="GO:0005765">
    <property type="term" value="C:lysosomal membrane"/>
    <property type="evidence" value="ECO:0007669"/>
    <property type="project" value="UniProtKB-SubCell"/>
</dbReference>
<dbReference type="GO" id="GO:0005764">
    <property type="term" value="C:lysosome"/>
    <property type="evidence" value="ECO:0000314"/>
    <property type="project" value="UniProtKB"/>
</dbReference>
<dbReference type="GO" id="GO:0005886">
    <property type="term" value="C:plasma membrane"/>
    <property type="evidence" value="ECO:0000314"/>
    <property type="project" value="UniProtKB"/>
</dbReference>
<dbReference type="GO" id="GO:0005802">
    <property type="term" value="C:trans-Golgi network"/>
    <property type="evidence" value="ECO:0000314"/>
    <property type="project" value="UniProtKB"/>
</dbReference>
<dbReference type="GO" id="GO:0051018">
    <property type="term" value="F:protein kinase A binding"/>
    <property type="evidence" value="ECO:0000247"/>
    <property type="project" value="MGI"/>
</dbReference>
<dbReference type="GO" id="GO:1990830">
    <property type="term" value="P:cellular response to leukemia inhibitory factor"/>
    <property type="evidence" value="ECO:0000270"/>
    <property type="project" value="MGI"/>
</dbReference>
<dbReference type="GO" id="GO:0016197">
    <property type="term" value="P:endosomal transport"/>
    <property type="evidence" value="ECO:0000304"/>
    <property type="project" value="MGI"/>
</dbReference>
<dbReference type="GO" id="GO:0000423">
    <property type="term" value="P:mitophagy"/>
    <property type="evidence" value="ECO:0000250"/>
    <property type="project" value="UniProtKB"/>
</dbReference>
<dbReference type="GO" id="GO:0008104">
    <property type="term" value="P:protein localization"/>
    <property type="evidence" value="ECO:0000247"/>
    <property type="project" value="MGI"/>
</dbReference>
<dbReference type="GO" id="GO:0034497">
    <property type="term" value="P:protein localization to phagophore assembly site"/>
    <property type="evidence" value="ECO:0000250"/>
    <property type="project" value="UniProtKB"/>
</dbReference>
<dbReference type="GO" id="GO:0007165">
    <property type="term" value="P:signal transduction"/>
    <property type="evidence" value="ECO:0000304"/>
    <property type="project" value="MGI"/>
</dbReference>
<dbReference type="CDD" id="cd06071">
    <property type="entry name" value="Beach"/>
    <property type="match status" value="1"/>
</dbReference>
<dbReference type="CDD" id="cd01201">
    <property type="entry name" value="PH_BEACH"/>
    <property type="match status" value="1"/>
</dbReference>
<dbReference type="FunFam" id="2.130.10.10:FF:000886">
    <property type="entry name" value="lipopolysaccharide-responsive and beige-like anchor protein isoform X1"/>
    <property type="match status" value="1"/>
</dbReference>
<dbReference type="FunFam" id="1.25.10.10:FF:000168">
    <property type="entry name" value="LPS responsive beige-like anchor protein"/>
    <property type="match status" value="1"/>
</dbReference>
<dbReference type="FunFam" id="1.10.1540.10:FF:000001">
    <property type="entry name" value="neurobeachin isoform X1"/>
    <property type="match status" value="1"/>
</dbReference>
<dbReference type="FunFam" id="2.30.29.30:FF:000059">
    <property type="entry name" value="neurobeachin isoform X1"/>
    <property type="match status" value="1"/>
</dbReference>
<dbReference type="FunFam" id="2.60.120.200:FF:000010">
    <property type="entry name" value="neurobeachin isoform X2"/>
    <property type="match status" value="1"/>
</dbReference>
<dbReference type="Gene3D" id="2.60.120.200">
    <property type="match status" value="1"/>
</dbReference>
<dbReference type="Gene3D" id="1.10.1540.10">
    <property type="entry name" value="BEACH domain"/>
    <property type="match status" value="1"/>
</dbReference>
<dbReference type="Gene3D" id="1.25.10.10">
    <property type="entry name" value="Leucine-rich Repeat Variant"/>
    <property type="match status" value="1"/>
</dbReference>
<dbReference type="Gene3D" id="2.30.29.30">
    <property type="entry name" value="Pleckstrin-homology domain (PH domain)/Phosphotyrosine-binding domain (PTB)"/>
    <property type="match status" value="1"/>
</dbReference>
<dbReference type="Gene3D" id="2.130.10.10">
    <property type="entry name" value="YVTN repeat-like/Quinoprotein amine dehydrogenase"/>
    <property type="match status" value="2"/>
</dbReference>
<dbReference type="InterPro" id="IPR011989">
    <property type="entry name" value="ARM-like"/>
</dbReference>
<dbReference type="InterPro" id="IPR016024">
    <property type="entry name" value="ARM-type_fold"/>
</dbReference>
<dbReference type="InterPro" id="IPR000409">
    <property type="entry name" value="BEACH_dom"/>
</dbReference>
<dbReference type="InterPro" id="IPR036372">
    <property type="entry name" value="BEACH_dom_sf"/>
</dbReference>
<dbReference type="InterPro" id="IPR050865">
    <property type="entry name" value="BEACH_Domain"/>
</dbReference>
<dbReference type="InterPro" id="IPR013320">
    <property type="entry name" value="ConA-like_dom_sf"/>
</dbReference>
<dbReference type="InterPro" id="IPR046851">
    <property type="entry name" value="NBCH_WD40"/>
</dbReference>
<dbReference type="InterPro" id="IPR010508">
    <property type="entry name" value="NBEA-like_DUF1088"/>
</dbReference>
<dbReference type="InterPro" id="IPR031570">
    <property type="entry name" value="NBEA/BDCP_DUF4704"/>
</dbReference>
<dbReference type="InterPro" id="IPR046852">
    <property type="entry name" value="Neurobeachin_a-sol"/>
</dbReference>
<dbReference type="InterPro" id="IPR023362">
    <property type="entry name" value="PH-BEACH_dom"/>
</dbReference>
<dbReference type="InterPro" id="IPR011993">
    <property type="entry name" value="PH-like_dom_sf"/>
</dbReference>
<dbReference type="InterPro" id="IPR015943">
    <property type="entry name" value="WD40/YVTN_repeat-like_dom_sf"/>
</dbReference>
<dbReference type="InterPro" id="IPR036322">
    <property type="entry name" value="WD40_repeat_dom_sf"/>
</dbReference>
<dbReference type="InterPro" id="IPR001680">
    <property type="entry name" value="WD40_rpt"/>
</dbReference>
<dbReference type="PANTHER" id="PTHR13743">
    <property type="entry name" value="BEIGE/BEACH-RELATED"/>
    <property type="match status" value="1"/>
</dbReference>
<dbReference type="PANTHER" id="PTHR13743:SF64">
    <property type="entry name" value="LIPOPOLYSACCHARIDE-RESPONSIVE AND BEIGE-LIKE ANCHOR PROTEIN"/>
    <property type="match status" value="1"/>
</dbReference>
<dbReference type="Pfam" id="PF02138">
    <property type="entry name" value="Beach"/>
    <property type="match status" value="1"/>
</dbReference>
<dbReference type="Pfam" id="PF06469">
    <property type="entry name" value="DUF1088"/>
    <property type="match status" value="1"/>
</dbReference>
<dbReference type="Pfam" id="PF15787">
    <property type="entry name" value="DUF4704"/>
    <property type="match status" value="1"/>
</dbReference>
<dbReference type="Pfam" id="PF13385">
    <property type="entry name" value="Laminin_G_3"/>
    <property type="match status" value="1"/>
</dbReference>
<dbReference type="Pfam" id="PF20426">
    <property type="entry name" value="NBCH_WD40"/>
    <property type="match status" value="1"/>
</dbReference>
<dbReference type="Pfam" id="PF20425">
    <property type="entry name" value="Neurobeachin"/>
    <property type="match status" value="1"/>
</dbReference>
<dbReference type="Pfam" id="PF14844">
    <property type="entry name" value="PH_BEACH"/>
    <property type="match status" value="1"/>
</dbReference>
<dbReference type="SMART" id="SM01026">
    <property type="entry name" value="Beach"/>
    <property type="match status" value="1"/>
</dbReference>
<dbReference type="SMART" id="SM00320">
    <property type="entry name" value="WD40"/>
    <property type="match status" value="5"/>
</dbReference>
<dbReference type="SUPFAM" id="SSF48371">
    <property type="entry name" value="ARM repeat"/>
    <property type="match status" value="1"/>
</dbReference>
<dbReference type="SUPFAM" id="SSF81837">
    <property type="entry name" value="BEACH domain"/>
    <property type="match status" value="1"/>
</dbReference>
<dbReference type="SUPFAM" id="SSF49899">
    <property type="entry name" value="Concanavalin A-like lectins/glucanases"/>
    <property type="match status" value="1"/>
</dbReference>
<dbReference type="SUPFAM" id="SSF50729">
    <property type="entry name" value="PH domain-like"/>
    <property type="match status" value="1"/>
</dbReference>
<dbReference type="SUPFAM" id="SSF50978">
    <property type="entry name" value="WD40 repeat-like"/>
    <property type="match status" value="1"/>
</dbReference>
<dbReference type="PROSITE" id="PS50197">
    <property type="entry name" value="BEACH"/>
    <property type="match status" value="1"/>
</dbReference>
<dbReference type="PROSITE" id="PS51783">
    <property type="entry name" value="PH_BEACH"/>
    <property type="match status" value="1"/>
</dbReference>
<reference key="1">
    <citation type="journal article" date="2001" name="J. Immunol.">
        <title>Identification of a novel lipopolysaccharide-inducible gene with key features of both A kinase anchor proteins and chs1/beige proteins.</title>
        <authorList>
            <person name="Wang J.-W."/>
            <person name="Howson J."/>
            <person name="Haller E."/>
            <person name="Kerr W.G."/>
        </authorList>
    </citation>
    <scope>NUCLEOTIDE SEQUENCE [MRNA] (ISOFORMS 1; 2 AND 3)</scope>
    <scope>FUNCTION</scope>
    <scope>SUBCELLULAR LOCATION</scope>
    <scope>INDUCTION</scope>
    <scope>TISSUE SPECIFICITY</scope>
    <source>
        <strain>C57BL/6J</strain>
        <tissue>Liver</tissue>
    </source>
</reference>
<reference key="2">
    <citation type="journal article" date="2004" name="Mol. Cell. Proteomics">
        <title>Phosphoproteomic analysis of the developing mouse brain.</title>
        <authorList>
            <person name="Ballif B.A."/>
            <person name="Villen J."/>
            <person name="Beausoleil S.A."/>
            <person name="Schwartz D."/>
            <person name="Gygi S.P."/>
        </authorList>
    </citation>
    <scope>IDENTIFICATION BY MASS SPECTROMETRY [LARGE SCALE ANALYSIS]</scope>
    <source>
        <tissue>Embryonic brain</tissue>
    </source>
</reference>
<reference key="3">
    <citation type="journal article" date="2007" name="Proc. Natl. Acad. Sci. U.S.A.">
        <title>Large-scale phosphorylation analysis of mouse liver.</title>
        <authorList>
            <person name="Villen J."/>
            <person name="Beausoleil S.A."/>
            <person name="Gerber S.A."/>
            <person name="Gygi S.P."/>
        </authorList>
    </citation>
    <scope>IDENTIFICATION BY MASS SPECTROMETRY [LARGE SCALE ANALYSIS]</scope>
    <source>
        <tissue>Liver</tissue>
    </source>
</reference>
<reference key="4">
    <citation type="journal article" date="2010" name="Cell">
        <title>A tissue-specific atlas of mouse protein phosphorylation and expression.</title>
        <authorList>
            <person name="Huttlin E.L."/>
            <person name="Jedrychowski M.P."/>
            <person name="Elias J.E."/>
            <person name="Goswami T."/>
            <person name="Rad R."/>
            <person name="Beausoleil S.A."/>
            <person name="Villen J."/>
            <person name="Haas W."/>
            <person name="Sowa M.E."/>
            <person name="Gygi S.P."/>
        </authorList>
    </citation>
    <scope>PHOSPHORYLATION [LARGE SCALE ANALYSIS] AT SER-979; SER-1003; SER-1219; SER-1221; SER-1228; SER-1770 AND SER-1773</scope>
    <scope>IDENTIFICATION BY MASS SPECTROMETRY [LARGE SCALE ANALYSIS]</scope>
    <source>
        <tissue>Brain</tissue>
        <tissue>Brown adipose tissue</tissue>
        <tissue>Heart</tissue>
        <tissue>Kidney</tissue>
        <tissue>Liver</tissue>
        <tissue>Lung</tissue>
        <tissue>Pancreas</tissue>
        <tissue>Spleen</tissue>
        <tissue>Testis</tissue>
    </source>
</reference>
<feature type="initiator methionine" description="Removed" evidence="1">
    <location>
        <position position="1"/>
    </location>
</feature>
<feature type="chain" id="PRO_0000386545" description="Lipopolysaccharide-responsive and beige-like anchor protein">
    <location>
        <begin position="2"/>
        <end position="2856"/>
    </location>
</feature>
<feature type="transmembrane region" description="Helical" evidence="2">
    <location>
        <begin position="1529"/>
        <end position="1545"/>
    </location>
</feature>
<feature type="repeat" description="WD 1">
    <location>
        <begin position="1298"/>
        <end position="1340"/>
    </location>
</feature>
<feature type="domain" description="BEACH-type PH" evidence="4">
    <location>
        <begin position="2066"/>
        <end position="2174"/>
    </location>
</feature>
<feature type="domain" description="BEACH" evidence="3">
    <location>
        <begin position="2193"/>
        <end position="2482"/>
    </location>
</feature>
<feature type="repeat" description="WD 2">
    <location>
        <begin position="2584"/>
        <end position="2626"/>
    </location>
</feature>
<feature type="repeat" description="WD 3">
    <location>
        <begin position="2629"/>
        <end position="2672"/>
    </location>
</feature>
<feature type="repeat" description="WD 4">
    <location>
        <begin position="2688"/>
        <end position="2728"/>
    </location>
</feature>
<feature type="repeat" description="WD 5">
    <location>
        <begin position="2770"/>
        <end position="2809"/>
    </location>
</feature>
<feature type="repeat" description="WD 6">
    <location>
        <begin position="2812"/>
        <end position="2851"/>
    </location>
</feature>
<feature type="region of interest" description="Disordered" evidence="5">
    <location>
        <begin position="1"/>
        <end position="35"/>
    </location>
</feature>
<feature type="region of interest" description="Disordered" evidence="5">
    <location>
        <begin position="939"/>
        <end position="1107"/>
    </location>
</feature>
<feature type="region of interest" description="Disordered" evidence="5">
    <location>
        <begin position="1253"/>
        <end position="1296"/>
    </location>
</feature>
<feature type="region of interest" description="Disordered" evidence="5">
    <location>
        <begin position="1556"/>
        <end position="1621"/>
    </location>
</feature>
<feature type="region of interest" description="Disordered" evidence="5">
    <location>
        <begin position="1750"/>
        <end position="1778"/>
    </location>
</feature>
<feature type="compositionally biased region" description="Polar residues" evidence="5">
    <location>
        <begin position="991"/>
        <end position="1009"/>
    </location>
</feature>
<feature type="compositionally biased region" description="Basic and acidic residues" evidence="5">
    <location>
        <begin position="1010"/>
        <end position="1026"/>
    </location>
</feature>
<feature type="compositionally biased region" description="Low complexity" evidence="5">
    <location>
        <begin position="1073"/>
        <end position="1082"/>
    </location>
</feature>
<feature type="compositionally biased region" description="Polar residues" evidence="5">
    <location>
        <begin position="1274"/>
        <end position="1283"/>
    </location>
</feature>
<feature type="compositionally biased region" description="Polar residues" evidence="5">
    <location>
        <begin position="1563"/>
        <end position="1573"/>
    </location>
</feature>
<feature type="compositionally biased region" description="Low complexity" evidence="5">
    <location>
        <begin position="1586"/>
        <end position="1601"/>
    </location>
</feature>
<feature type="modified residue" description="N-acetylalanine" evidence="1">
    <location>
        <position position="2"/>
    </location>
</feature>
<feature type="modified residue" description="Phosphoserine" evidence="1">
    <location>
        <position position="10"/>
    </location>
</feature>
<feature type="modified residue" description="Phosphoserine" evidence="8">
    <location>
        <position position="979"/>
    </location>
</feature>
<feature type="modified residue" description="Phosphoserine" evidence="8">
    <location>
        <position position="1003"/>
    </location>
</feature>
<feature type="modified residue" description="Phosphoserine" evidence="1">
    <location>
        <position position="1097"/>
    </location>
</feature>
<feature type="modified residue" description="Phosphoserine" evidence="1">
    <location>
        <position position="1132"/>
    </location>
</feature>
<feature type="modified residue" description="Phosphoserine" evidence="1">
    <location>
        <position position="1136"/>
    </location>
</feature>
<feature type="modified residue" description="Phosphoserine" evidence="8">
    <location>
        <position position="1219"/>
    </location>
</feature>
<feature type="modified residue" description="Phosphoserine" evidence="8">
    <location>
        <position position="1221"/>
    </location>
</feature>
<feature type="modified residue" description="Phosphoserine" evidence="8">
    <location>
        <position position="1228"/>
    </location>
</feature>
<feature type="modified residue" description="Phosphoserine" evidence="1">
    <location>
        <position position="1244"/>
    </location>
</feature>
<feature type="modified residue" description="Phosphoserine" evidence="1">
    <location>
        <position position="1258"/>
    </location>
</feature>
<feature type="modified residue" description="Phosphoserine" evidence="1">
    <location>
        <position position="1487"/>
    </location>
</feature>
<feature type="modified residue" description="Phosphoserine" evidence="1">
    <location>
        <position position="1497"/>
    </location>
</feature>
<feature type="modified residue" description="Phosphoserine" evidence="1">
    <location>
        <position position="1608"/>
    </location>
</feature>
<feature type="modified residue" description="Phosphoserine" evidence="8">
    <location>
        <position position="1770"/>
    </location>
</feature>
<feature type="modified residue" description="Phosphoserine" evidence="8">
    <location>
        <position position="1773"/>
    </location>
</feature>
<feature type="modified residue" description="Phosphoserine" evidence="1">
    <location>
        <position position="2057"/>
    </location>
</feature>
<feature type="modified residue" description="Phosphoserine" evidence="1">
    <location>
        <position position="2489"/>
    </location>
</feature>
<feature type="splice variant" id="VSP_038227" description="In isoform 3." evidence="7">
    <original>ACGTGTHRRQV</original>
    <variation>GLPLLSLFAIH</variation>
    <location>
        <begin position="2569"/>
        <end position="2579"/>
    </location>
</feature>
<feature type="splice variant" id="VSP_038228" description="In isoform 3." evidence="7">
    <location>
        <begin position="2580"/>
        <end position="2856"/>
    </location>
</feature>
<feature type="splice variant" id="VSP_038229" description="In isoform 2." evidence="7">
    <original>AIQLSRDGQYLLTGGD</original>
    <variation>VSAVGSTLFLLLGSSK</variation>
    <location>
        <begin position="2777"/>
        <end position="2792"/>
    </location>
</feature>
<feature type="splice variant" id="VSP_038230" description="In isoform 2." evidence="7">
    <location>
        <begin position="2793"/>
        <end position="2856"/>
    </location>
</feature>
<accession>Q9ESE1</accession>
<accession>Q9ESD3</accession>
<accession>Q9ESD4</accession>